<name>KPYG_TOBAC</name>
<evidence type="ECO:0000250" key="1"/>
<evidence type="ECO:0000250" key="2">
    <source>
        <dbReference type="UniProtKB" id="P14618"/>
    </source>
</evidence>
<evidence type="ECO:0000255" key="3"/>
<evidence type="ECO:0000305" key="4"/>
<proteinExistence type="evidence at transcript level"/>
<dbReference type="EC" id="2.7.1.40"/>
<dbReference type="EMBL" id="Z28374">
    <property type="protein sequence ID" value="CAA82223.1"/>
    <property type="molecule type" value="mRNA"/>
</dbReference>
<dbReference type="PIR" id="S44287">
    <property type="entry name" value="S44287"/>
</dbReference>
<dbReference type="RefSeq" id="NP_001313038.1">
    <property type="nucleotide sequence ID" value="NM_001326109.1"/>
</dbReference>
<dbReference type="SMR" id="Q40546"/>
<dbReference type="STRING" id="4097.Q40546"/>
<dbReference type="PaxDb" id="4097-Q40546"/>
<dbReference type="GeneID" id="107822892"/>
<dbReference type="KEGG" id="nta:107822892"/>
<dbReference type="OrthoDB" id="108365at2759"/>
<dbReference type="UniPathway" id="UPA00109">
    <property type="reaction ID" value="UER00188"/>
</dbReference>
<dbReference type="Proteomes" id="UP000084051">
    <property type="component" value="Unplaced"/>
</dbReference>
<dbReference type="GO" id="GO:0009570">
    <property type="term" value="C:chloroplast stroma"/>
    <property type="evidence" value="ECO:0000318"/>
    <property type="project" value="GO_Central"/>
</dbReference>
<dbReference type="GO" id="GO:0005737">
    <property type="term" value="C:cytoplasm"/>
    <property type="evidence" value="ECO:0000318"/>
    <property type="project" value="GO_Central"/>
</dbReference>
<dbReference type="GO" id="GO:0005524">
    <property type="term" value="F:ATP binding"/>
    <property type="evidence" value="ECO:0007669"/>
    <property type="project" value="UniProtKB-KW"/>
</dbReference>
<dbReference type="GO" id="GO:0016301">
    <property type="term" value="F:kinase activity"/>
    <property type="evidence" value="ECO:0007669"/>
    <property type="project" value="UniProtKB-KW"/>
</dbReference>
<dbReference type="GO" id="GO:0000287">
    <property type="term" value="F:magnesium ion binding"/>
    <property type="evidence" value="ECO:0007669"/>
    <property type="project" value="InterPro"/>
</dbReference>
<dbReference type="GO" id="GO:0030955">
    <property type="term" value="F:potassium ion binding"/>
    <property type="evidence" value="ECO:0007669"/>
    <property type="project" value="InterPro"/>
</dbReference>
<dbReference type="GO" id="GO:0004743">
    <property type="term" value="F:pyruvate kinase activity"/>
    <property type="evidence" value="ECO:0000318"/>
    <property type="project" value="GO_Central"/>
</dbReference>
<dbReference type="GO" id="GO:0006096">
    <property type="term" value="P:glycolytic process"/>
    <property type="evidence" value="ECO:0000318"/>
    <property type="project" value="GO_Central"/>
</dbReference>
<dbReference type="FunFam" id="2.40.33.10:FF:000003">
    <property type="entry name" value="Pyruvate kinase"/>
    <property type="match status" value="1"/>
</dbReference>
<dbReference type="FunFam" id="3.20.20.60:FF:000025">
    <property type="entry name" value="Pyruvate kinase"/>
    <property type="match status" value="1"/>
</dbReference>
<dbReference type="Gene3D" id="3.20.20.60">
    <property type="entry name" value="Phosphoenolpyruvate-binding domains"/>
    <property type="match status" value="1"/>
</dbReference>
<dbReference type="Gene3D" id="2.40.33.10">
    <property type="entry name" value="PK beta-barrel domain-like"/>
    <property type="match status" value="1"/>
</dbReference>
<dbReference type="Gene3D" id="3.40.1380.20">
    <property type="entry name" value="Pyruvate kinase, C-terminal domain"/>
    <property type="match status" value="1"/>
</dbReference>
<dbReference type="InterPro" id="IPR001697">
    <property type="entry name" value="Pyr_Knase"/>
</dbReference>
<dbReference type="InterPro" id="IPR015813">
    <property type="entry name" value="Pyrv/PenolPyrv_kinase-like_dom"/>
</dbReference>
<dbReference type="InterPro" id="IPR040442">
    <property type="entry name" value="Pyrv_kinase-like_dom_sf"/>
</dbReference>
<dbReference type="InterPro" id="IPR011037">
    <property type="entry name" value="Pyrv_Knase-like_insert_dom_sf"/>
</dbReference>
<dbReference type="InterPro" id="IPR018209">
    <property type="entry name" value="Pyrv_Knase_AS"/>
</dbReference>
<dbReference type="InterPro" id="IPR015793">
    <property type="entry name" value="Pyrv_Knase_brl"/>
</dbReference>
<dbReference type="InterPro" id="IPR015795">
    <property type="entry name" value="Pyrv_Knase_C"/>
</dbReference>
<dbReference type="InterPro" id="IPR036918">
    <property type="entry name" value="Pyrv_Knase_C_sf"/>
</dbReference>
<dbReference type="InterPro" id="IPR015806">
    <property type="entry name" value="Pyrv_Knase_insert_dom_sf"/>
</dbReference>
<dbReference type="NCBIfam" id="NF004491">
    <property type="entry name" value="PRK05826.1"/>
    <property type="match status" value="1"/>
</dbReference>
<dbReference type="NCBIfam" id="TIGR01064">
    <property type="entry name" value="pyruv_kin"/>
    <property type="match status" value="1"/>
</dbReference>
<dbReference type="PANTHER" id="PTHR11817">
    <property type="entry name" value="PYRUVATE KINASE"/>
    <property type="match status" value="1"/>
</dbReference>
<dbReference type="Pfam" id="PF00224">
    <property type="entry name" value="PK"/>
    <property type="match status" value="1"/>
</dbReference>
<dbReference type="Pfam" id="PF02887">
    <property type="entry name" value="PK_C"/>
    <property type="match status" value="1"/>
</dbReference>
<dbReference type="PRINTS" id="PR01050">
    <property type="entry name" value="PYRUVTKNASE"/>
</dbReference>
<dbReference type="SUPFAM" id="SSF51621">
    <property type="entry name" value="Phosphoenolpyruvate/pyruvate domain"/>
    <property type="match status" value="1"/>
</dbReference>
<dbReference type="SUPFAM" id="SSF50800">
    <property type="entry name" value="PK beta-barrel domain-like"/>
    <property type="match status" value="1"/>
</dbReference>
<dbReference type="SUPFAM" id="SSF52935">
    <property type="entry name" value="PK C-terminal domain-like"/>
    <property type="match status" value="1"/>
</dbReference>
<dbReference type="PROSITE" id="PS00110">
    <property type="entry name" value="PYRUVATE_KINASE"/>
    <property type="match status" value="1"/>
</dbReference>
<organism>
    <name type="scientific">Nicotiana tabacum</name>
    <name type="common">Common tobacco</name>
    <dbReference type="NCBI Taxonomy" id="4097"/>
    <lineage>
        <taxon>Eukaryota</taxon>
        <taxon>Viridiplantae</taxon>
        <taxon>Streptophyta</taxon>
        <taxon>Embryophyta</taxon>
        <taxon>Tracheophyta</taxon>
        <taxon>Spermatophyta</taxon>
        <taxon>Magnoliopsida</taxon>
        <taxon>eudicotyledons</taxon>
        <taxon>Gunneridae</taxon>
        <taxon>Pentapetalae</taxon>
        <taxon>asterids</taxon>
        <taxon>lamiids</taxon>
        <taxon>Solanales</taxon>
        <taxon>Solanaceae</taxon>
        <taxon>Nicotianoideae</taxon>
        <taxon>Nicotianeae</taxon>
        <taxon>Nicotiana</taxon>
    </lineage>
</organism>
<reference key="1">
    <citation type="journal article" date="1995" name="Plant Mol. Biol.">
        <title>Molecular characterization of plastid pyruvate kinase from castor and tobacco.</title>
        <authorList>
            <person name="Blakeley S.D."/>
            <person name="Gottlob-Mchugh S."/>
            <person name="Wan J."/>
            <person name="Crews L."/>
            <person name="Miki B."/>
            <person name="Ko K."/>
            <person name="Dennis D.T."/>
        </authorList>
    </citation>
    <scope>NUCLEOTIDE SEQUENCE [MRNA]</scope>
    <source>
        <strain>cv. Petit Havana SR1</strain>
        <tissue>Seed</tissue>
    </source>
</reference>
<keyword id="KW-0067">ATP-binding</keyword>
<keyword id="KW-0150">Chloroplast</keyword>
<keyword id="KW-0324">Glycolysis</keyword>
<keyword id="KW-0418">Kinase</keyword>
<keyword id="KW-0460">Magnesium</keyword>
<keyword id="KW-0479">Metal-binding</keyword>
<keyword id="KW-0547">Nucleotide-binding</keyword>
<keyword id="KW-0934">Plastid</keyword>
<keyword id="KW-0630">Potassium</keyword>
<keyword id="KW-0670">Pyruvate</keyword>
<keyword id="KW-1185">Reference proteome</keyword>
<keyword id="KW-0808">Transferase</keyword>
<keyword id="KW-0809">Transit peptide</keyword>
<accession>Q40546</accession>
<comment type="catalytic activity">
    <reaction>
        <text>pyruvate + ATP = phosphoenolpyruvate + ADP + H(+)</text>
        <dbReference type="Rhea" id="RHEA:18157"/>
        <dbReference type="ChEBI" id="CHEBI:15361"/>
        <dbReference type="ChEBI" id="CHEBI:15378"/>
        <dbReference type="ChEBI" id="CHEBI:30616"/>
        <dbReference type="ChEBI" id="CHEBI:58702"/>
        <dbReference type="ChEBI" id="CHEBI:456216"/>
        <dbReference type="EC" id="2.7.1.40"/>
    </reaction>
</comment>
<comment type="cofactor">
    <cofactor evidence="1">
        <name>Mg(2+)</name>
        <dbReference type="ChEBI" id="CHEBI:18420"/>
    </cofactor>
</comment>
<comment type="cofactor">
    <cofactor evidence="1">
        <name>K(+)</name>
        <dbReference type="ChEBI" id="CHEBI:29103"/>
    </cofactor>
</comment>
<comment type="pathway">
    <text>Carbohydrate degradation; glycolysis; pyruvate from D-glyceraldehyde 3-phosphate: step 5/5.</text>
</comment>
<comment type="subunit">
    <text evidence="1">Homotetramer.</text>
</comment>
<comment type="subcellular location">
    <subcellularLocation>
        <location>Plastid</location>
        <location>Chloroplast</location>
    </subcellularLocation>
</comment>
<comment type="tissue specificity">
    <text>Highest levels in leaves. Also found in stems, roots and flowers.</text>
</comment>
<comment type="developmental stage">
    <text>Most abundantly expressed during the early globular to early cotyledonary stages of embryo development.</text>
</comment>
<comment type="similarity">
    <text evidence="4">Belongs to the pyruvate kinase family.</text>
</comment>
<feature type="transit peptide" description="Chloroplast" evidence="3">
    <location>
        <begin position="1"/>
        <end status="unknown"/>
    </location>
</feature>
<feature type="chain" id="PRO_0000016664" description="Pyruvate kinase isozyme G, chloroplastic">
    <location>
        <begin status="unknown"/>
        <end position="562"/>
    </location>
</feature>
<feature type="binding site" evidence="1">
    <location>
        <position position="121"/>
    </location>
    <ligand>
        <name>substrate</name>
    </ligand>
</feature>
<feature type="binding site" evidence="2">
    <location>
        <begin position="123"/>
        <end position="126"/>
    </location>
    <ligand>
        <name>ATP</name>
        <dbReference type="ChEBI" id="CHEBI:30616"/>
    </ligand>
</feature>
<feature type="binding site" evidence="1">
    <location>
        <position position="123"/>
    </location>
    <ligand>
        <name>K(+)</name>
        <dbReference type="ChEBI" id="CHEBI:29103"/>
    </ligand>
</feature>
<feature type="binding site" evidence="1">
    <location>
        <position position="125"/>
    </location>
    <ligand>
        <name>K(+)</name>
        <dbReference type="ChEBI" id="CHEBI:29103"/>
    </ligand>
</feature>
<feature type="binding site" evidence="1">
    <location>
        <position position="156"/>
    </location>
    <ligand>
        <name>K(+)</name>
        <dbReference type="ChEBI" id="CHEBI:29103"/>
    </ligand>
</feature>
<feature type="binding site" evidence="1">
    <location>
        <position position="157"/>
    </location>
    <ligand>
        <name>K(+)</name>
        <dbReference type="ChEBI" id="CHEBI:29103"/>
    </ligand>
</feature>
<feature type="binding site" evidence="3">
    <location>
        <position position="308"/>
    </location>
    <ligand>
        <name>Mg(2+)</name>
        <dbReference type="ChEBI" id="CHEBI:18420"/>
    </ligand>
</feature>
<feature type="binding site" evidence="1">
    <location>
        <position position="331"/>
    </location>
    <ligand>
        <name>substrate</name>
    </ligand>
</feature>
<feature type="binding site" evidence="1">
    <location>
        <position position="332"/>
    </location>
    <ligand>
        <name>Mg(2+)</name>
        <dbReference type="ChEBI" id="CHEBI:18420"/>
    </ligand>
</feature>
<feature type="binding site" evidence="1">
    <location>
        <position position="332"/>
    </location>
    <ligand>
        <name>substrate</name>
    </ligand>
</feature>
<feature type="binding site" evidence="1">
    <location>
        <position position="364"/>
    </location>
    <ligand>
        <name>substrate</name>
    </ligand>
</feature>
<feature type="site" description="Transition state stabilizer" evidence="1">
    <location>
        <position position="306"/>
    </location>
</feature>
<sequence length="562" mass="61868">MATMNLPTGLHVAAKPASLDRLSSAKNVGDLFFSDSRHRKRVNTSNQIMAVQSLEHIHGVNNNVYANYVNFNVPSSGYSLGQESVYLNSPRKTKIVCTIGPSTSSREMIWKLAEAGMNVARLNMSHGDHASHQRTIDLVKEYNAQFEDKVIAIMLDTKGPEVISGDVPKPILLKEGQEFNFSIKRGVSTEDTVSVNYDDFINDVEAGDILLVDGGMMSLAVKSKTSDIVKCEVIDGGELKSRRHLNVRGKSATLPSITEKDWDDIKFGVNNQVDFYAVSFVKDAKVVHELKDYLKSCNADIHVIVKIESADSIPNLHSIISASDGAMVARGDLGAELPIEEVPLLQEDIIRRCQSMQKPVIVATNMLESMIDHPTPTRAEVSDISIAVREGADAVMLSGETAHGKYPLKAVKVMHIVALRTESSLQKSTSSPSQSAAYKSHMGEMFAFHSSSMANTLSTPIIVFTRTGSMAIILSHNRPSSTVFAFTNNERVKQRLALYHGVVPIYMEFSSDAEETFSRAIKLLLSKSLVKDGQYVTLVQSGAQPIWRRHSTHHIQVRKVQS</sequence>
<protein>
    <recommendedName>
        <fullName>Pyruvate kinase isozyme G, chloroplastic</fullName>
        <ecNumber>2.7.1.40</ecNumber>
    </recommendedName>
</protein>